<reference key="1">
    <citation type="journal article" date="2003" name="Nat. Genet.">
        <title>Comparative analysis of the genome sequences of Bordetella pertussis, Bordetella parapertussis and Bordetella bronchiseptica.</title>
        <authorList>
            <person name="Parkhill J."/>
            <person name="Sebaihia M."/>
            <person name="Preston A."/>
            <person name="Murphy L.D."/>
            <person name="Thomson N.R."/>
            <person name="Harris D.E."/>
            <person name="Holden M.T.G."/>
            <person name="Churcher C.M."/>
            <person name="Bentley S.D."/>
            <person name="Mungall K.L."/>
            <person name="Cerdeno-Tarraga A.-M."/>
            <person name="Temple L."/>
            <person name="James K.D."/>
            <person name="Harris B."/>
            <person name="Quail M.A."/>
            <person name="Achtman M."/>
            <person name="Atkin R."/>
            <person name="Baker S."/>
            <person name="Basham D."/>
            <person name="Bason N."/>
            <person name="Cherevach I."/>
            <person name="Chillingworth T."/>
            <person name="Collins M."/>
            <person name="Cronin A."/>
            <person name="Davis P."/>
            <person name="Doggett J."/>
            <person name="Feltwell T."/>
            <person name="Goble A."/>
            <person name="Hamlin N."/>
            <person name="Hauser H."/>
            <person name="Holroyd S."/>
            <person name="Jagels K."/>
            <person name="Leather S."/>
            <person name="Moule S."/>
            <person name="Norberczak H."/>
            <person name="O'Neil S."/>
            <person name="Ormond D."/>
            <person name="Price C."/>
            <person name="Rabbinowitsch E."/>
            <person name="Rutter S."/>
            <person name="Sanders M."/>
            <person name="Saunders D."/>
            <person name="Seeger K."/>
            <person name="Sharp S."/>
            <person name="Simmonds M."/>
            <person name="Skelton J."/>
            <person name="Squares R."/>
            <person name="Squares S."/>
            <person name="Stevens K."/>
            <person name="Unwin L."/>
            <person name="Whitehead S."/>
            <person name="Barrell B.G."/>
            <person name="Maskell D.J."/>
        </authorList>
    </citation>
    <scope>NUCLEOTIDE SEQUENCE [LARGE SCALE GENOMIC DNA]</scope>
    <source>
        <strain>12822 / ATCC BAA-587 / NCTC 13253</strain>
    </source>
</reference>
<sequence>MSLLHRASFYISAARLDQLPPAGAPEVCFVGRSNAGKSSAINVLCNQRRLAFSSKTPGRTRLINMFGLPDPLAPGEQLGFLVDLPGYGYASVAHREKEKWADILGGYLRDRASLAGIVLLIDIRRGVTDLDRRLTNFIAPTGRPVLALLTKADKLPYGQRMRTVFAVRKDLADIGALHMVPFSSTERIGLEEAGAHIENWISPKVVP</sequence>
<dbReference type="EMBL" id="BX640423">
    <property type="protein sequence ID" value="CAE39805.1"/>
    <property type="molecule type" value="Genomic_DNA"/>
</dbReference>
<dbReference type="SMR" id="Q7W2C4"/>
<dbReference type="KEGG" id="bpa:BPP0064"/>
<dbReference type="HOGENOM" id="CLU_033732_1_1_4"/>
<dbReference type="Proteomes" id="UP000001421">
    <property type="component" value="Chromosome"/>
</dbReference>
<dbReference type="GO" id="GO:0005829">
    <property type="term" value="C:cytosol"/>
    <property type="evidence" value="ECO:0007669"/>
    <property type="project" value="TreeGrafter"/>
</dbReference>
<dbReference type="GO" id="GO:0005525">
    <property type="term" value="F:GTP binding"/>
    <property type="evidence" value="ECO:0007669"/>
    <property type="project" value="UniProtKB-UniRule"/>
</dbReference>
<dbReference type="GO" id="GO:0046872">
    <property type="term" value="F:metal ion binding"/>
    <property type="evidence" value="ECO:0007669"/>
    <property type="project" value="UniProtKB-KW"/>
</dbReference>
<dbReference type="GO" id="GO:0000917">
    <property type="term" value="P:division septum assembly"/>
    <property type="evidence" value="ECO:0007669"/>
    <property type="project" value="UniProtKB-KW"/>
</dbReference>
<dbReference type="CDD" id="cd01876">
    <property type="entry name" value="YihA_EngB"/>
    <property type="match status" value="1"/>
</dbReference>
<dbReference type="Gene3D" id="3.40.50.300">
    <property type="entry name" value="P-loop containing nucleotide triphosphate hydrolases"/>
    <property type="match status" value="1"/>
</dbReference>
<dbReference type="HAMAP" id="MF_00321">
    <property type="entry name" value="GTPase_EngB"/>
    <property type="match status" value="1"/>
</dbReference>
<dbReference type="InterPro" id="IPR030393">
    <property type="entry name" value="G_ENGB_dom"/>
</dbReference>
<dbReference type="InterPro" id="IPR006073">
    <property type="entry name" value="GTP-bd"/>
</dbReference>
<dbReference type="InterPro" id="IPR019987">
    <property type="entry name" value="GTP-bd_ribosome_bio_YsxC"/>
</dbReference>
<dbReference type="InterPro" id="IPR027417">
    <property type="entry name" value="P-loop_NTPase"/>
</dbReference>
<dbReference type="NCBIfam" id="TIGR03598">
    <property type="entry name" value="GTPase_YsxC"/>
    <property type="match status" value="1"/>
</dbReference>
<dbReference type="PANTHER" id="PTHR11649:SF13">
    <property type="entry name" value="ENGB-TYPE G DOMAIN-CONTAINING PROTEIN"/>
    <property type="match status" value="1"/>
</dbReference>
<dbReference type="PANTHER" id="PTHR11649">
    <property type="entry name" value="MSS1/TRME-RELATED GTP-BINDING PROTEIN"/>
    <property type="match status" value="1"/>
</dbReference>
<dbReference type="Pfam" id="PF01926">
    <property type="entry name" value="MMR_HSR1"/>
    <property type="match status" value="1"/>
</dbReference>
<dbReference type="SUPFAM" id="SSF52540">
    <property type="entry name" value="P-loop containing nucleoside triphosphate hydrolases"/>
    <property type="match status" value="1"/>
</dbReference>
<dbReference type="PROSITE" id="PS51706">
    <property type="entry name" value="G_ENGB"/>
    <property type="match status" value="1"/>
</dbReference>
<name>ENGB_BORPA</name>
<feature type="chain" id="PRO_0000266827" description="Probable GTP-binding protein EngB">
    <location>
        <begin position="1"/>
        <end position="207"/>
    </location>
</feature>
<feature type="domain" description="EngB-type G" evidence="1">
    <location>
        <begin position="23"/>
        <end position="203"/>
    </location>
</feature>
<feature type="binding site" evidence="1">
    <location>
        <begin position="31"/>
        <end position="38"/>
    </location>
    <ligand>
        <name>GTP</name>
        <dbReference type="ChEBI" id="CHEBI:37565"/>
    </ligand>
</feature>
<feature type="binding site" evidence="1">
    <location>
        <position position="38"/>
    </location>
    <ligand>
        <name>Mg(2+)</name>
        <dbReference type="ChEBI" id="CHEBI:18420"/>
    </ligand>
</feature>
<feature type="binding site" evidence="1">
    <location>
        <begin position="58"/>
        <end position="62"/>
    </location>
    <ligand>
        <name>GTP</name>
        <dbReference type="ChEBI" id="CHEBI:37565"/>
    </ligand>
</feature>
<feature type="binding site" evidence="1">
    <location>
        <position position="60"/>
    </location>
    <ligand>
        <name>Mg(2+)</name>
        <dbReference type="ChEBI" id="CHEBI:18420"/>
    </ligand>
</feature>
<feature type="binding site" evidence="1">
    <location>
        <begin position="83"/>
        <end position="86"/>
    </location>
    <ligand>
        <name>GTP</name>
        <dbReference type="ChEBI" id="CHEBI:37565"/>
    </ligand>
</feature>
<feature type="binding site" evidence="1">
    <location>
        <begin position="150"/>
        <end position="153"/>
    </location>
    <ligand>
        <name>GTP</name>
        <dbReference type="ChEBI" id="CHEBI:37565"/>
    </ligand>
</feature>
<feature type="binding site" evidence="1">
    <location>
        <begin position="182"/>
        <end position="184"/>
    </location>
    <ligand>
        <name>GTP</name>
        <dbReference type="ChEBI" id="CHEBI:37565"/>
    </ligand>
</feature>
<proteinExistence type="inferred from homology"/>
<accession>Q7W2C4</accession>
<protein>
    <recommendedName>
        <fullName evidence="1">Probable GTP-binding protein EngB</fullName>
    </recommendedName>
</protein>
<keyword id="KW-0131">Cell cycle</keyword>
<keyword id="KW-0132">Cell division</keyword>
<keyword id="KW-0342">GTP-binding</keyword>
<keyword id="KW-0460">Magnesium</keyword>
<keyword id="KW-0479">Metal-binding</keyword>
<keyword id="KW-0547">Nucleotide-binding</keyword>
<keyword id="KW-0717">Septation</keyword>
<organism>
    <name type="scientific">Bordetella parapertussis (strain 12822 / ATCC BAA-587 / NCTC 13253)</name>
    <dbReference type="NCBI Taxonomy" id="257311"/>
    <lineage>
        <taxon>Bacteria</taxon>
        <taxon>Pseudomonadati</taxon>
        <taxon>Pseudomonadota</taxon>
        <taxon>Betaproteobacteria</taxon>
        <taxon>Burkholderiales</taxon>
        <taxon>Alcaligenaceae</taxon>
        <taxon>Bordetella</taxon>
    </lineage>
</organism>
<comment type="function">
    <text evidence="1">Necessary for normal cell division and for the maintenance of normal septation.</text>
</comment>
<comment type="cofactor">
    <cofactor evidence="1">
        <name>Mg(2+)</name>
        <dbReference type="ChEBI" id="CHEBI:18420"/>
    </cofactor>
</comment>
<comment type="similarity">
    <text evidence="1">Belongs to the TRAFAC class TrmE-Era-EngA-EngB-Septin-like GTPase superfamily. EngB GTPase family.</text>
</comment>
<gene>
    <name evidence="1" type="primary">engB</name>
    <name type="ordered locus">BPP0064</name>
</gene>
<evidence type="ECO:0000255" key="1">
    <source>
        <dbReference type="HAMAP-Rule" id="MF_00321"/>
    </source>
</evidence>